<sequence>MAKRDFYEILGLGKNASDEEIKKAYRKLAMKHHPDRNPDSKGAEDKFKEAKEAYEMLSDPQKRDAYDRYGHAGVDPNMGGGGGGGGFADAFGDIFGDIFGQAGGGRGGRGGPQVYRGADLRYNLEITLEQAAHGYDTTIRVPSWDSCETCDGSGAKPGTSPINCTTCGGHGQVRMQQGFFSVLQTCPKCHGSGKINPSPCTACSGAGKIKRNKTLEVKIPSGIDDGMRIRSSGNGEPGMNGGPPGDLYVEIRIKQHAMFQREGDDLHCEIPISFAKAALGGEIEVPTLNGKASFTIPEGTQSGKTFRLRSKGIKGVRSGYAGDLFCHVVVETPVTLTEKQKELLREFELLTIEGGSKHSPQTKSWKDKVKEFFE</sequence>
<organism>
    <name type="scientific">Herminiimonas arsenicoxydans</name>
    <dbReference type="NCBI Taxonomy" id="204773"/>
    <lineage>
        <taxon>Bacteria</taxon>
        <taxon>Pseudomonadati</taxon>
        <taxon>Pseudomonadota</taxon>
        <taxon>Betaproteobacteria</taxon>
        <taxon>Burkholderiales</taxon>
        <taxon>Oxalobacteraceae</taxon>
        <taxon>Herminiimonas</taxon>
    </lineage>
</organism>
<accession>A4G8D1</accession>
<protein>
    <recommendedName>
        <fullName evidence="1">Chaperone protein DnaJ</fullName>
    </recommendedName>
</protein>
<feature type="chain" id="PRO_1000085208" description="Chaperone protein DnaJ">
    <location>
        <begin position="1"/>
        <end position="374"/>
    </location>
</feature>
<feature type="domain" description="J" evidence="1">
    <location>
        <begin position="5"/>
        <end position="70"/>
    </location>
</feature>
<feature type="repeat" description="CXXCXGXG motif">
    <location>
        <begin position="147"/>
        <end position="154"/>
    </location>
</feature>
<feature type="repeat" description="CXXCXGXG motif">
    <location>
        <begin position="164"/>
        <end position="171"/>
    </location>
</feature>
<feature type="repeat" description="CXXCXGXG motif">
    <location>
        <begin position="186"/>
        <end position="193"/>
    </location>
</feature>
<feature type="repeat" description="CXXCXGXG motif">
    <location>
        <begin position="200"/>
        <end position="207"/>
    </location>
</feature>
<feature type="zinc finger region" description="CR-type" evidence="1">
    <location>
        <begin position="134"/>
        <end position="212"/>
    </location>
</feature>
<feature type="region of interest" description="Disordered" evidence="2">
    <location>
        <begin position="28"/>
        <end position="47"/>
    </location>
</feature>
<feature type="compositionally biased region" description="Basic and acidic residues" evidence="2">
    <location>
        <begin position="35"/>
        <end position="47"/>
    </location>
</feature>
<feature type="binding site" evidence="1">
    <location>
        <position position="147"/>
    </location>
    <ligand>
        <name>Zn(2+)</name>
        <dbReference type="ChEBI" id="CHEBI:29105"/>
        <label>1</label>
    </ligand>
</feature>
<feature type="binding site" evidence="1">
    <location>
        <position position="150"/>
    </location>
    <ligand>
        <name>Zn(2+)</name>
        <dbReference type="ChEBI" id="CHEBI:29105"/>
        <label>1</label>
    </ligand>
</feature>
<feature type="binding site" evidence="1">
    <location>
        <position position="164"/>
    </location>
    <ligand>
        <name>Zn(2+)</name>
        <dbReference type="ChEBI" id="CHEBI:29105"/>
        <label>2</label>
    </ligand>
</feature>
<feature type="binding site" evidence="1">
    <location>
        <position position="167"/>
    </location>
    <ligand>
        <name>Zn(2+)</name>
        <dbReference type="ChEBI" id="CHEBI:29105"/>
        <label>2</label>
    </ligand>
</feature>
<feature type="binding site" evidence="1">
    <location>
        <position position="186"/>
    </location>
    <ligand>
        <name>Zn(2+)</name>
        <dbReference type="ChEBI" id="CHEBI:29105"/>
        <label>2</label>
    </ligand>
</feature>
<feature type="binding site" evidence="1">
    <location>
        <position position="189"/>
    </location>
    <ligand>
        <name>Zn(2+)</name>
        <dbReference type="ChEBI" id="CHEBI:29105"/>
        <label>2</label>
    </ligand>
</feature>
<feature type="binding site" evidence="1">
    <location>
        <position position="200"/>
    </location>
    <ligand>
        <name>Zn(2+)</name>
        <dbReference type="ChEBI" id="CHEBI:29105"/>
        <label>1</label>
    </ligand>
</feature>
<feature type="binding site" evidence="1">
    <location>
        <position position="203"/>
    </location>
    <ligand>
        <name>Zn(2+)</name>
        <dbReference type="ChEBI" id="CHEBI:29105"/>
        <label>1</label>
    </ligand>
</feature>
<comment type="function">
    <text evidence="1">Participates actively in the response to hyperosmotic and heat shock by preventing the aggregation of stress-denatured proteins and by disaggregating proteins, also in an autonomous, DnaK-independent fashion. Unfolded proteins bind initially to DnaJ; upon interaction with the DnaJ-bound protein, DnaK hydrolyzes its bound ATP, resulting in the formation of a stable complex. GrpE releases ADP from DnaK; ATP binding to DnaK triggers the release of the substrate protein, thus completing the reaction cycle. Several rounds of ATP-dependent interactions between DnaJ, DnaK and GrpE are required for fully efficient folding. Also involved, together with DnaK and GrpE, in the DNA replication of plasmids through activation of initiation proteins.</text>
</comment>
<comment type="cofactor">
    <cofactor evidence="1">
        <name>Zn(2+)</name>
        <dbReference type="ChEBI" id="CHEBI:29105"/>
    </cofactor>
    <text evidence="1">Binds 2 Zn(2+) ions per monomer.</text>
</comment>
<comment type="subunit">
    <text evidence="1">Homodimer.</text>
</comment>
<comment type="subcellular location">
    <subcellularLocation>
        <location evidence="1">Cytoplasm</location>
    </subcellularLocation>
</comment>
<comment type="domain">
    <text evidence="1">The J domain is necessary and sufficient to stimulate DnaK ATPase activity. Zinc center 1 plays an important role in the autonomous, DnaK-independent chaperone activity of DnaJ. Zinc center 2 is essential for interaction with DnaK and for DnaJ activity.</text>
</comment>
<comment type="similarity">
    <text evidence="1">Belongs to the DnaJ family.</text>
</comment>
<dbReference type="EMBL" id="CU207211">
    <property type="protein sequence ID" value="CAL62768.1"/>
    <property type="molecule type" value="Genomic_DNA"/>
</dbReference>
<dbReference type="SMR" id="A4G8D1"/>
<dbReference type="STRING" id="204773.HEAR2646"/>
<dbReference type="KEGG" id="har:HEAR2646"/>
<dbReference type="eggNOG" id="COG0484">
    <property type="taxonomic scope" value="Bacteria"/>
</dbReference>
<dbReference type="HOGENOM" id="CLU_017633_0_7_4"/>
<dbReference type="OrthoDB" id="9779889at2"/>
<dbReference type="Proteomes" id="UP000006697">
    <property type="component" value="Chromosome"/>
</dbReference>
<dbReference type="GO" id="GO:0005737">
    <property type="term" value="C:cytoplasm"/>
    <property type="evidence" value="ECO:0007669"/>
    <property type="project" value="UniProtKB-SubCell"/>
</dbReference>
<dbReference type="GO" id="GO:0005524">
    <property type="term" value="F:ATP binding"/>
    <property type="evidence" value="ECO:0007669"/>
    <property type="project" value="InterPro"/>
</dbReference>
<dbReference type="GO" id="GO:0031072">
    <property type="term" value="F:heat shock protein binding"/>
    <property type="evidence" value="ECO:0007669"/>
    <property type="project" value="InterPro"/>
</dbReference>
<dbReference type="GO" id="GO:0051082">
    <property type="term" value="F:unfolded protein binding"/>
    <property type="evidence" value="ECO:0007669"/>
    <property type="project" value="UniProtKB-UniRule"/>
</dbReference>
<dbReference type="GO" id="GO:0008270">
    <property type="term" value="F:zinc ion binding"/>
    <property type="evidence" value="ECO:0007669"/>
    <property type="project" value="UniProtKB-UniRule"/>
</dbReference>
<dbReference type="GO" id="GO:0051085">
    <property type="term" value="P:chaperone cofactor-dependent protein refolding"/>
    <property type="evidence" value="ECO:0007669"/>
    <property type="project" value="TreeGrafter"/>
</dbReference>
<dbReference type="GO" id="GO:0006260">
    <property type="term" value="P:DNA replication"/>
    <property type="evidence" value="ECO:0007669"/>
    <property type="project" value="UniProtKB-KW"/>
</dbReference>
<dbReference type="GO" id="GO:0042026">
    <property type="term" value="P:protein refolding"/>
    <property type="evidence" value="ECO:0007669"/>
    <property type="project" value="TreeGrafter"/>
</dbReference>
<dbReference type="GO" id="GO:0009408">
    <property type="term" value="P:response to heat"/>
    <property type="evidence" value="ECO:0007669"/>
    <property type="project" value="InterPro"/>
</dbReference>
<dbReference type="CDD" id="cd06257">
    <property type="entry name" value="DnaJ"/>
    <property type="match status" value="1"/>
</dbReference>
<dbReference type="CDD" id="cd10747">
    <property type="entry name" value="DnaJ_C"/>
    <property type="match status" value="1"/>
</dbReference>
<dbReference type="CDD" id="cd10719">
    <property type="entry name" value="DnaJ_zf"/>
    <property type="match status" value="1"/>
</dbReference>
<dbReference type="FunFam" id="1.10.287.110:FF:000034">
    <property type="entry name" value="Chaperone protein DnaJ"/>
    <property type="match status" value="1"/>
</dbReference>
<dbReference type="FunFam" id="2.10.230.10:FF:000002">
    <property type="entry name" value="Molecular chaperone DnaJ"/>
    <property type="match status" value="1"/>
</dbReference>
<dbReference type="FunFam" id="2.60.260.20:FF:000004">
    <property type="entry name" value="Molecular chaperone DnaJ"/>
    <property type="match status" value="1"/>
</dbReference>
<dbReference type="Gene3D" id="1.10.287.110">
    <property type="entry name" value="DnaJ domain"/>
    <property type="match status" value="1"/>
</dbReference>
<dbReference type="Gene3D" id="2.10.230.10">
    <property type="entry name" value="Heat shock protein DnaJ, cysteine-rich domain"/>
    <property type="match status" value="1"/>
</dbReference>
<dbReference type="Gene3D" id="2.60.260.20">
    <property type="entry name" value="Urease metallochaperone UreE, N-terminal domain"/>
    <property type="match status" value="2"/>
</dbReference>
<dbReference type="HAMAP" id="MF_01152">
    <property type="entry name" value="DnaJ"/>
    <property type="match status" value="1"/>
</dbReference>
<dbReference type="InterPro" id="IPR012724">
    <property type="entry name" value="DnaJ"/>
</dbReference>
<dbReference type="InterPro" id="IPR002939">
    <property type="entry name" value="DnaJ_C"/>
</dbReference>
<dbReference type="InterPro" id="IPR001623">
    <property type="entry name" value="DnaJ_domain"/>
</dbReference>
<dbReference type="InterPro" id="IPR018253">
    <property type="entry name" value="DnaJ_domain_CS"/>
</dbReference>
<dbReference type="InterPro" id="IPR008971">
    <property type="entry name" value="HSP40/DnaJ_pept-bd"/>
</dbReference>
<dbReference type="InterPro" id="IPR001305">
    <property type="entry name" value="HSP_DnaJ_Cys-rich_dom"/>
</dbReference>
<dbReference type="InterPro" id="IPR036410">
    <property type="entry name" value="HSP_DnaJ_Cys-rich_dom_sf"/>
</dbReference>
<dbReference type="InterPro" id="IPR036869">
    <property type="entry name" value="J_dom_sf"/>
</dbReference>
<dbReference type="NCBIfam" id="TIGR02349">
    <property type="entry name" value="DnaJ_bact"/>
    <property type="match status" value="1"/>
</dbReference>
<dbReference type="NCBIfam" id="NF008035">
    <property type="entry name" value="PRK10767.1"/>
    <property type="match status" value="1"/>
</dbReference>
<dbReference type="PANTHER" id="PTHR43096:SF48">
    <property type="entry name" value="CHAPERONE PROTEIN DNAJ"/>
    <property type="match status" value="1"/>
</dbReference>
<dbReference type="PANTHER" id="PTHR43096">
    <property type="entry name" value="DNAJ HOMOLOG 1, MITOCHONDRIAL-RELATED"/>
    <property type="match status" value="1"/>
</dbReference>
<dbReference type="Pfam" id="PF00226">
    <property type="entry name" value="DnaJ"/>
    <property type="match status" value="1"/>
</dbReference>
<dbReference type="Pfam" id="PF01556">
    <property type="entry name" value="DnaJ_C"/>
    <property type="match status" value="1"/>
</dbReference>
<dbReference type="Pfam" id="PF00684">
    <property type="entry name" value="DnaJ_CXXCXGXG"/>
    <property type="match status" value="1"/>
</dbReference>
<dbReference type="PRINTS" id="PR00625">
    <property type="entry name" value="JDOMAIN"/>
</dbReference>
<dbReference type="SMART" id="SM00271">
    <property type="entry name" value="DnaJ"/>
    <property type="match status" value="1"/>
</dbReference>
<dbReference type="SUPFAM" id="SSF46565">
    <property type="entry name" value="Chaperone J-domain"/>
    <property type="match status" value="1"/>
</dbReference>
<dbReference type="SUPFAM" id="SSF57938">
    <property type="entry name" value="DnaJ/Hsp40 cysteine-rich domain"/>
    <property type="match status" value="1"/>
</dbReference>
<dbReference type="SUPFAM" id="SSF49493">
    <property type="entry name" value="HSP40/DnaJ peptide-binding domain"/>
    <property type="match status" value="2"/>
</dbReference>
<dbReference type="PROSITE" id="PS00636">
    <property type="entry name" value="DNAJ_1"/>
    <property type="match status" value="1"/>
</dbReference>
<dbReference type="PROSITE" id="PS50076">
    <property type="entry name" value="DNAJ_2"/>
    <property type="match status" value="1"/>
</dbReference>
<dbReference type="PROSITE" id="PS51188">
    <property type="entry name" value="ZF_CR"/>
    <property type="match status" value="1"/>
</dbReference>
<name>DNAJ_HERAR</name>
<gene>
    <name evidence="1" type="primary">dnaJ</name>
    <name type="ordered locus">HEAR2646</name>
</gene>
<reference key="1">
    <citation type="journal article" date="2007" name="PLoS Genet.">
        <title>A tale of two oxidation states: bacterial colonization of arsenic-rich environments.</title>
        <authorList>
            <person name="Muller D."/>
            <person name="Medigue C."/>
            <person name="Koechler S."/>
            <person name="Barbe V."/>
            <person name="Barakat M."/>
            <person name="Talla E."/>
            <person name="Bonnefoy V."/>
            <person name="Krin E."/>
            <person name="Arsene-Ploetze F."/>
            <person name="Carapito C."/>
            <person name="Chandler M."/>
            <person name="Cournoyer B."/>
            <person name="Cruveiller S."/>
            <person name="Dossat C."/>
            <person name="Duval S."/>
            <person name="Heymann M."/>
            <person name="Leize E."/>
            <person name="Lieutaud A."/>
            <person name="Lievremont D."/>
            <person name="Makita Y."/>
            <person name="Mangenot S."/>
            <person name="Nitschke W."/>
            <person name="Ortet P."/>
            <person name="Perdrial N."/>
            <person name="Schoepp B."/>
            <person name="Siguier P."/>
            <person name="Simeonova D.D."/>
            <person name="Rouy Z."/>
            <person name="Segurens B."/>
            <person name="Turlin E."/>
            <person name="Vallenet D."/>
            <person name="van Dorsselaer A."/>
            <person name="Weiss S."/>
            <person name="Weissenbach J."/>
            <person name="Lett M.-C."/>
            <person name="Danchin A."/>
            <person name="Bertin P.N."/>
        </authorList>
    </citation>
    <scope>NUCLEOTIDE SEQUENCE [LARGE SCALE GENOMIC DNA]</scope>
    <source>
        <strain>ULPAs1</strain>
    </source>
</reference>
<proteinExistence type="inferred from homology"/>
<evidence type="ECO:0000255" key="1">
    <source>
        <dbReference type="HAMAP-Rule" id="MF_01152"/>
    </source>
</evidence>
<evidence type="ECO:0000256" key="2">
    <source>
        <dbReference type="SAM" id="MobiDB-lite"/>
    </source>
</evidence>
<keyword id="KW-0143">Chaperone</keyword>
<keyword id="KW-0963">Cytoplasm</keyword>
<keyword id="KW-0235">DNA replication</keyword>
<keyword id="KW-0479">Metal-binding</keyword>
<keyword id="KW-1185">Reference proteome</keyword>
<keyword id="KW-0677">Repeat</keyword>
<keyword id="KW-0346">Stress response</keyword>
<keyword id="KW-0862">Zinc</keyword>
<keyword id="KW-0863">Zinc-finger</keyword>